<organism>
    <name type="scientific">Homo sapiens</name>
    <name type="common">Human</name>
    <dbReference type="NCBI Taxonomy" id="9606"/>
    <lineage>
        <taxon>Eukaryota</taxon>
        <taxon>Metazoa</taxon>
        <taxon>Chordata</taxon>
        <taxon>Craniata</taxon>
        <taxon>Vertebrata</taxon>
        <taxon>Euteleostomi</taxon>
        <taxon>Mammalia</taxon>
        <taxon>Eutheria</taxon>
        <taxon>Euarchontoglires</taxon>
        <taxon>Primates</taxon>
        <taxon>Haplorrhini</taxon>
        <taxon>Catarrhini</taxon>
        <taxon>Hominidae</taxon>
        <taxon>Homo</taxon>
    </lineage>
</organism>
<feature type="chain" id="PRO_0000270179" description="Src kinase-associated phosphoprotein 2">
    <location>
        <begin position="1"/>
        <end position="359"/>
    </location>
</feature>
<feature type="domain" description="PH" evidence="4">
    <location>
        <begin position="116"/>
        <end position="219"/>
    </location>
</feature>
<feature type="domain" description="SH3" evidence="5">
    <location>
        <begin position="297"/>
        <end position="358"/>
    </location>
</feature>
<feature type="region of interest" description="Homodimerization" evidence="1">
    <location>
        <begin position="14"/>
        <end position="64"/>
    </location>
</feature>
<feature type="region of interest" description="Disordered" evidence="6">
    <location>
        <begin position="66"/>
        <end position="88"/>
    </location>
</feature>
<feature type="region of interest" description="Disordered" evidence="6">
    <location>
        <begin position="264"/>
        <end position="293"/>
    </location>
</feature>
<feature type="compositionally biased region" description="Basic and acidic residues" evidence="6">
    <location>
        <begin position="275"/>
        <end position="293"/>
    </location>
</feature>
<feature type="modified residue" description="Phosphoserine" evidence="17">
    <location>
        <position position="5"/>
    </location>
</feature>
<feature type="modified residue" description="Phosphoserine" evidence="17 18">
    <location>
        <position position="6"/>
    </location>
</feature>
<feature type="modified residue" description="Phosphoserine" evidence="3">
    <location>
        <position position="9"/>
    </location>
</feature>
<feature type="modified residue" description="Phosphotyrosine" evidence="11">
    <location>
        <position position="75"/>
    </location>
</feature>
<feature type="modified residue" description="Phosphoserine" evidence="3">
    <location>
        <position position="87"/>
    </location>
</feature>
<feature type="modified residue" description="Phosphoserine" evidence="3">
    <location>
        <position position="90"/>
    </location>
</feature>
<feature type="modified residue" description="Phosphotyrosine" evidence="2">
    <location>
        <position position="151"/>
    </location>
</feature>
<feature type="modified residue" description="Phosphotyrosine" evidence="18">
    <location>
        <position position="197"/>
    </location>
</feature>
<feature type="modified residue" description="Phosphoserine" evidence="3">
    <location>
        <position position="223"/>
    </location>
</feature>
<feature type="modified residue" description="Phosphotyrosine" evidence="2">
    <location>
        <position position="261"/>
    </location>
</feature>
<feature type="modified residue" description="Phosphoserine" evidence="3">
    <location>
        <position position="283"/>
    </location>
</feature>
<feature type="modified residue" description="Phosphoserine" evidence="3">
    <location>
        <position position="286"/>
    </location>
</feature>
<feature type="sequence variant" id="VAR_029812" description="In dbSNP:rs1129771." evidence="13 14 15">
    <original>A</original>
    <variation>S</variation>
    <location>
        <position position="202"/>
    </location>
</feature>
<feature type="sequence variant" id="VAR_029813" description="In dbSNP:rs17154402.">
    <original>S</original>
    <variation>T</variation>
    <location>
        <position position="253"/>
    </location>
</feature>
<feature type="sequence conflict" description="In Ref. 1; BAA36194." evidence="16" ref="1">
    <original>S</original>
    <variation>C</variation>
    <location>
        <position position="6"/>
    </location>
</feature>
<feature type="sequence conflict" description="In Ref. 7; BAD96605." evidence="16" ref="7">
    <original>Y</original>
    <variation>H</variation>
    <location>
        <position position="352"/>
    </location>
</feature>
<comment type="function">
    <text evidence="9 14">May be involved in B-cell and macrophage adhesion processes. In B-cells, may act by coupling the B-cell receptor (BCR) to integrin activation. May play a role in src signaling pathway.</text>
</comment>
<comment type="subunit">
    <text evidence="1 7 8 9 10 11 12 13">Homodimer (By similarity). Interacts with PTPNS1. Part of a complex consisting of SKAP2, FYB1 and PTPNS1. Part of a complex consisting of SKAP2, FYB1 and LILRB3. May interact with actin (By similarity). Interacts with FYB1, which is required for SKAP2 protein stability. Interacts with LAT, GRB2, PTK2B and PRAM1. May interact with FYN, HCK and LYN. Interacts with FASLG.</text>
</comment>
<comment type="interaction">
    <interactant intactId="EBI-2483161">
        <id>O75563</id>
    </interactant>
    <interactant intactId="EBI-297353">
        <id>P00533</id>
        <label>EGFR</label>
    </interactant>
    <organismsDiffer>false</organismsDiffer>
    <experiments>2</experiments>
</comment>
<comment type="interaction">
    <interactant intactId="EBI-2483161">
        <id>O75563</id>
    </interactant>
    <interactant intactId="EBI-1211241">
        <id>Q9Y2R2</id>
        <label>PTPN22</label>
    </interactant>
    <organismsDiffer>false</organismsDiffer>
    <experiments>3</experiments>
</comment>
<comment type="subcellular location">
    <subcellularLocation>
        <location evidence="9">Cytoplasm</location>
    </subcellularLocation>
</comment>
<comment type="tissue specificity">
    <text evidence="7 13 14">Ubiquitously expressed. Present in platelets (at protein level).</text>
</comment>
<comment type="induction">
    <text evidence="8 14">By retinoic acid.</text>
</comment>
<comment type="domain">
    <text>The SH3 domain interacts with FYB1 and PTK2B.</text>
</comment>
<comment type="PTM">
    <text evidence="7 9 11 12 13 16">Phosphorylated in resting platelets. Phosphorylated by FYN on Tyr-261 upon T-cell activation (Probable). Dephosphorylated on Tyr-75 by PTPN22.</text>
</comment>
<comment type="similarity">
    <text evidence="16">Belongs to the SKAP family.</text>
</comment>
<keyword id="KW-0002">3D-structure</keyword>
<keyword id="KW-0075">B-cell activation</keyword>
<keyword id="KW-0963">Cytoplasm</keyword>
<keyword id="KW-0597">Phosphoprotein</keyword>
<keyword id="KW-1267">Proteomics identification</keyword>
<keyword id="KW-1185">Reference proteome</keyword>
<keyword id="KW-0728">SH3 domain</keyword>
<dbReference type="EMBL" id="AB014486">
    <property type="protein sequence ID" value="BAA36194.1"/>
    <property type="molecule type" value="mRNA"/>
</dbReference>
<dbReference type="EMBL" id="AJ004886">
    <property type="protein sequence ID" value="CAA06193.1"/>
    <property type="molecule type" value="mRNA"/>
</dbReference>
<dbReference type="EMBL" id="AF072166">
    <property type="protein sequence ID" value="AAC39924.1"/>
    <property type="molecule type" value="mRNA"/>
</dbReference>
<dbReference type="EMBL" id="AF051323">
    <property type="protein sequence ID" value="AAC99296.1"/>
    <property type="molecule type" value="mRNA"/>
</dbReference>
<dbReference type="EMBL" id="AK313209">
    <property type="protein sequence ID" value="BAG36025.1"/>
    <property type="molecule type" value="mRNA"/>
</dbReference>
<dbReference type="EMBL" id="AK222885">
    <property type="protein sequence ID" value="BAD96605.1"/>
    <property type="molecule type" value="mRNA"/>
</dbReference>
<dbReference type="EMBL" id="AC003999">
    <property type="protein sequence ID" value="AAS02033.1"/>
    <property type="molecule type" value="Genomic_DNA"/>
</dbReference>
<dbReference type="EMBL" id="AC011299">
    <property type="protein sequence ID" value="AAS07536.1"/>
    <property type="molecule type" value="Genomic_DNA"/>
</dbReference>
<dbReference type="EMBL" id="CH236948">
    <property type="protein sequence ID" value="EAL24231.1"/>
    <property type="molecule type" value="Genomic_DNA"/>
</dbReference>
<dbReference type="EMBL" id="CH471073">
    <property type="protein sequence ID" value="EAW93859.1"/>
    <property type="molecule type" value="Genomic_DNA"/>
</dbReference>
<dbReference type="EMBL" id="BC002893">
    <property type="protein sequence ID" value="AAH02893.1"/>
    <property type="molecule type" value="mRNA"/>
</dbReference>
<dbReference type="EMBL" id="BC036044">
    <property type="protein sequence ID" value="AAH36044.1"/>
    <property type="molecule type" value="mRNA"/>
</dbReference>
<dbReference type="CCDS" id="CCDS5400.1"/>
<dbReference type="RefSeq" id="NP_001290397.1">
    <property type="nucleotide sequence ID" value="NM_001303468.1"/>
</dbReference>
<dbReference type="RefSeq" id="NP_003921.2">
    <property type="nucleotide sequence ID" value="NM_003930.4"/>
</dbReference>
<dbReference type="RefSeq" id="XP_016868260.1">
    <property type="nucleotide sequence ID" value="XM_017012771.3"/>
</dbReference>
<dbReference type="RefSeq" id="XP_054215268.1">
    <property type="nucleotide sequence ID" value="XM_054359293.1"/>
</dbReference>
<dbReference type="PDB" id="3OMH">
    <property type="method" value="X-ray"/>
    <property type="resolution" value="2.90 A"/>
    <property type="chains" value="E/F/G/H=71-79"/>
</dbReference>
<dbReference type="PDBsum" id="3OMH"/>
<dbReference type="SMR" id="O75563"/>
<dbReference type="BioGRID" id="114448">
    <property type="interactions" value="51"/>
</dbReference>
<dbReference type="FunCoup" id="O75563">
    <property type="interactions" value="2036"/>
</dbReference>
<dbReference type="IntAct" id="O75563">
    <property type="interactions" value="28"/>
</dbReference>
<dbReference type="MINT" id="O75563"/>
<dbReference type="STRING" id="9606.ENSP00000005587"/>
<dbReference type="iPTMnet" id="O75563"/>
<dbReference type="PhosphoSitePlus" id="O75563"/>
<dbReference type="BioMuta" id="SKAP2"/>
<dbReference type="OGP" id="O75563"/>
<dbReference type="jPOST" id="O75563"/>
<dbReference type="MassIVE" id="O75563"/>
<dbReference type="PaxDb" id="9606-ENSP00000005587"/>
<dbReference type="PeptideAtlas" id="O75563"/>
<dbReference type="ProteomicsDB" id="50086"/>
<dbReference type="Antibodypedia" id="25901">
    <property type="antibodies" value="226 antibodies from 32 providers"/>
</dbReference>
<dbReference type="DNASU" id="8935"/>
<dbReference type="Ensembl" id="ENST00000345317.7">
    <property type="protein sequence ID" value="ENSP00000005587.2"/>
    <property type="gene ID" value="ENSG00000005020.13"/>
</dbReference>
<dbReference type="GeneID" id="8935"/>
<dbReference type="KEGG" id="hsa:8935"/>
<dbReference type="MANE-Select" id="ENST00000345317.7">
    <property type="protein sequence ID" value="ENSP00000005587.2"/>
    <property type="RefSeq nucleotide sequence ID" value="NM_003930.5"/>
    <property type="RefSeq protein sequence ID" value="NP_003921.2"/>
</dbReference>
<dbReference type="UCSC" id="uc003syc.4">
    <property type="organism name" value="human"/>
</dbReference>
<dbReference type="AGR" id="HGNC:15687"/>
<dbReference type="CTD" id="8935"/>
<dbReference type="DisGeNET" id="8935"/>
<dbReference type="GeneCards" id="SKAP2"/>
<dbReference type="HGNC" id="HGNC:15687">
    <property type="gene designation" value="SKAP2"/>
</dbReference>
<dbReference type="HPA" id="ENSG00000005020">
    <property type="expression patterns" value="Low tissue specificity"/>
</dbReference>
<dbReference type="MIM" id="605215">
    <property type="type" value="gene"/>
</dbReference>
<dbReference type="neXtProt" id="NX_O75563"/>
<dbReference type="OpenTargets" id="ENSG00000005020"/>
<dbReference type="PharmGKB" id="PA162403393"/>
<dbReference type="VEuPathDB" id="HostDB:ENSG00000005020"/>
<dbReference type="eggNOG" id="ENOG502QVFD">
    <property type="taxonomic scope" value="Eukaryota"/>
</dbReference>
<dbReference type="GeneTree" id="ENSGT00390000017856"/>
<dbReference type="HOGENOM" id="CLU_062032_0_0_1"/>
<dbReference type="InParanoid" id="O75563"/>
<dbReference type="OMA" id="ASDRCDK"/>
<dbReference type="OrthoDB" id="243840at2759"/>
<dbReference type="PAN-GO" id="O75563">
    <property type="GO annotations" value="2 GO annotations based on evolutionary models"/>
</dbReference>
<dbReference type="PhylomeDB" id="O75563"/>
<dbReference type="TreeFam" id="TF331055"/>
<dbReference type="PathwayCommons" id="O75563"/>
<dbReference type="Reactome" id="R-HSA-391160">
    <property type="pathway name" value="Signal regulatory protein family interactions"/>
</dbReference>
<dbReference type="SignaLink" id="O75563"/>
<dbReference type="BioGRID-ORCS" id="8935">
    <property type="hits" value="78 hits in 1145 CRISPR screens"/>
</dbReference>
<dbReference type="ChiTaRS" id="SKAP2">
    <property type="organism name" value="human"/>
</dbReference>
<dbReference type="EvolutionaryTrace" id="O75563"/>
<dbReference type="GeneWiki" id="SKAP2"/>
<dbReference type="GenomeRNAi" id="8935"/>
<dbReference type="Pharos" id="O75563">
    <property type="development level" value="Tbio"/>
</dbReference>
<dbReference type="PRO" id="PR:O75563"/>
<dbReference type="Proteomes" id="UP000005640">
    <property type="component" value="Chromosome 7"/>
</dbReference>
<dbReference type="RNAct" id="O75563">
    <property type="molecule type" value="protein"/>
</dbReference>
<dbReference type="Bgee" id="ENSG00000005020">
    <property type="expression patterns" value="Expressed in sperm and 211 other cell types or tissues"/>
</dbReference>
<dbReference type="ExpressionAtlas" id="O75563">
    <property type="expression patterns" value="baseline and differential"/>
</dbReference>
<dbReference type="GO" id="GO:0005737">
    <property type="term" value="C:cytoplasm"/>
    <property type="evidence" value="ECO:0000318"/>
    <property type="project" value="GO_Central"/>
</dbReference>
<dbReference type="GO" id="GO:0005829">
    <property type="term" value="C:cytosol"/>
    <property type="evidence" value="ECO:0000314"/>
    <property type="project" value="HPA"/>
</dbReference>
<dbReference type="GO" id="GO:0005654">
    <property type="term" value="C:nucleoplasm"/>
    <property type="evidence" value="ECO:0000314"/>
    <property type="project" value="HPA"/>
</dbReference>
<dbReference type="GO" id="GO:0005886">
    <property type="term" value="C:plasma membrane"/>
    <property type="evidence" value="ECO:0000314"/>
    <property type="project" value="MGI"/>
</dbReference>
<dbReference type="GO" id="GO:0042113">
    <property type="term" value="P:B cell activation"/>
    <property type="evidence" value="ECO:0007669"/>
    <property type="project" value="UniProtKB-KW"/>
</dbReference>
<dbReference type="GO" id="GO:0008285">
    <property type="term" value="P:negative regulation of cell population proliferation"/>
    <property type="evidence" value="ECO:0007669"/>
    <property type="project" value="Ensembl"/>
</dbReference>
<dbReference type="GO" id="GO:0007165">
    <property type="term" value="P:signal transduction"/>
    <property type="evidence" value="ECO:0000304"/>
    <property type="project" value="ProtInc"/>
</dbReference>
<dbReference type="CDD" id="cd13381">
    <property type="entry name" value="PH_Skap-hom_Skap2"/>
    <property type="match status" value="1"/>
</dbReference>
<dbReference type="CDD" id="cd12045">
    <property type="entry name" value="SH3_SKAP2"/>
    <property type="match status" value="1"/>
</dbReference>
<dbReference type="FunFam" id="2.30.29.30:FF:000194">
    <property type="entry name" value="Putative src kinase-associated phosphoprotein 2"/>
    <property type="match status" value="1"/>
</dbReference>
<dbReference type="FunFam" id="2.30.30.40:FF:000097">
    <property type="entry name" value="Putative src kinase-associated phosphoprotein 2"/>
    <property type="match status" value="1"/>
</dbReference>
<dbReference type="Gene3D" id="6.10.250.220">
    <property type="match status" value="1"/>
</dbReference>
<dbReference type="Gene3D" id="2.30.29.30">
    <property type="entry name" value="Pleckstrin-homology domain (PH domain)/Phosphotyrosine-binding domain (PTB)"/>
    <property type="match status" value="1"/>
</dbReference>
<dbReference type="Gene3D" id="2.30.30.40">
    <property type="entry name" value="SH3 Domains"/>
    <property type="match status" value="1"/>
</dbReference>
<dbReference type="InterPro" id="IPR011993">
    <property type="entry name" value="PH-like_dom_sf"/>
</dbReference>
<dbReference type="InterPro" id="IPR001849">
    <property type="entry name" value="PH_domain"/>
</dbReference>
<dbReference type="InterPro" id="IPR036028">
    <property type="entry name" value="SH3-like_dom_sf"/>
</dbReference>
<dbReference type="InterPro" id="IPR001452">
    <property type="entry name" value="SH3_domain"/>
</dbReference>
<dbReference type="InterPro" id="IPR037781">
    <property type="entry name" value="SKAP_fam"/>
</dbReference>
<dbReference type="PANTHER" id="PTHR15129:SF2">
    <property type="entry name" value="SRC KINASE-ASSOCIATED PHOSPHOPROTEIN 2"/>
    <property type="match status" value="1"/>
</dbReference>
<dbReference type="PANTHER" id="PTHR15129">
    <property type="entry name" value="SRC-ASSOCIATED ADAPTOR PROTEIN"/>
    <property type="match status" value="1"/>
</dbReference>
<dbReference type="Pfam" id="PF00169">
    <property type="entry name" value="PH"/>
    <property type="match status" value="1"/>
</dbReference>
<dbReference type="Pfam" id="PF00018">
    <property type="entry name" value="SH3_1"/>
    <property type="match status" value="1"/>
</dbReference>
<dbReference type="PRINTS" id="PR00452">
    <property type="entry name" value="SH3DOMAIN"/>
</dbReference>
<dbReference type="SMART" id="SM00233">
    <property type="entry name" value="PH"/>
    <property type="match status" value="1"/>
</dbReference>
<dbReference type="SMART" id="SM00326">
    <property type="entry name" value="SH3"/>
    <property type="match status" value="1"/>
</dbReference>
<dbReference type="SUPFAM" id="SSF50729">
    <property type="entry name" value="PH domain-like"/>
    <property type="match status" value="1"/>
</dbReference>
<dbReference type="SUPFAM" id="SSF50044">
    <property type="entry name" value="SH3-domain"/>
    <property type="match status" value="1"/>
</dbReference>
<dbReference type="PROSITE" id="PS50003">
    <property type="entry name" value="PH_DOMAIN"/>
    <property type="match status" value="1"/>
</dbReference>
<dbReference type="PROSITE" id="PS50002">
    <property type="entry name" value="SH3"/>
    <property type="match status" value="1"/>
</dbReference>
<reference key="1">
    <citation type="journal article" date="1998" name="Biochem. Biophys. Res. Commun.">
        <title>RA70 is a src kinase-associated protein expressed ubiquitously.</title>
        <authorList>
            <person name="Kouroku Y."/>
            <person name="Soyama A."/>
            <person name="Fujita E."/>
            <person name="Urase K."/>
            <person name="Tsukahara T."/>
            <person name="Momoi T."/>
        </authorList>
    </citation>
    <scope>NUCLEOTIDE SEQUENCE [MRNA]</scope>
    <scope>TISSUE SPECIFICITY</scope>
    <scope>INDUCTION</scope>
    <scope>POSSIBLE INTERACTION WITH FYN; HCK AND LYN</scope>
    <scope>FUNCTION</scope>
    <scope>VARIANT SER-202</scope>
    <source>
        <tissue>Testis</tissue>
    </source>
</reference>
<reference key="2">
    <citation type="journal article" date="1998" name="FEBS Lett.">
        <title>SKAP-HOM, a novel adaptor protein homologous to the FYN-associated protein SKAP55.</title>
        <authorList>
            <person name="Marie-Cardine A."/>
            <person name="Verhagen A.M."/>
            <person name="Eckerskorn C."/>
            <person name="Schraven B."/>
        </authorList>
    </citation>
    <scope>NUCLEOTIDE SEQUENCE [MRNA]</scope>
    <scope>TISSUE SPECIFICITY</scope>
    <scope>PHOSPHORYLATION</scope>
    <scope>INTERACTION WITH FYB1</scope>
    <scope>VARIANT SER-202</scope>
    <source>
        <tissue>Leukocyte</tissue>
    </source>
</reference>
<reference key="3">
    <citation type="journal article" date="1998" name="Proc. Natl. Acad. Sci. U.S.A.">
        <title>FYB (FYN binding protein) serves as a binding partner for lymphoid protein and FYN kinase substrate SKAP55 and a SKAP55-related protein in T cells.</title>
        <authorList>
            <person name="Liu J."/>
            <person name="Kang H."/>
            <person name="Raab M."/>
            <person name="da Silva A.J."/>
            <person name="Kraeft S.-K."/>
            <person name="Rudd C.E."/>
        </authorList>
    </citation>
    <scope>NUCLEOTIDE SEQUENCE [MRNA]</scope>
    <scope>INTERACTION WITH FYB1</scope>
    <scope>PHOSPHORYLATION</scope>
    <source>
        <tissue>Lymphocyte</tissue>
    </source>
</reference>
<reference key="4">
    <citation type="journal article" date="2003" name="J. Biol. Chem.">
        <title>Identification and characterization of a novel Pyk2/related adhesion focal tyrosine kinase-associated protein that inhibits alpha-synuclein phosphorylation.</title>
        <authorList>
            <person name="Takahashi T."/>
            <person name="Yamashita H."/>
            <person name="Nagano Y."/>
            <person name="Nakamura T."/>
            <person name="Ohmori H."/>
            <person name="Avraham H."/>
            <person name="Avraham S."/>
            <person name="Yasuda M."/>
            <person name="Matsumoto M."/>
        </authorList>
    </citation>
    <scope>NUCLEOTIDE SEQUENCE [MRNA]</scope>
    <scope>INTERACTION WITH PTK2B</scope>
    <scope>PHOSPHORYLATION</scope>
    <scope>SUBCELLULAR LOCATION</scope>
    <scope>FUNCTION</scope>
    <source>
        <tissue>Hippocampus</tissue>
    </source>
</reference>
<reference key="5">
    <citation type="submission" date="1998-02" db="EMBL/GenBank/DDBJ databases">
        <title>Src-associated adaptor protein with PH and SH3 domain.</title>
        <authorList>
            <person name="Lee J.-S."/>
            <person name="Suh K.S."/>
            <person name="Burr J.G."/>
        </authorList>
    </citation>
    <scope>NUCLEOTIDE SEQUENCE [MRNA]</scope>
    <scope>VARIANT SER-202</scope>
    <source>
        <tissue>Pancreas</tissue>
    </source>
</reference>
<reference key="6">
    <citation type="journal article" date="2004" name="Nat. Genet.">
        <title>Complete sequencing and characterization of 21,243 full-length human cDNAs.</title>
        <authorList>
            <person name="Ota T."/>
            <person name="Suzuki Y."/>
            <person name="Nishikawa T."/>
            <person name="Otsuki T."/>
            <person name="Sugiyama T."/>
            <person name="Irie R."/>
            <person name="Wakamatsu A."/>
            <person name="Hayashi K."/>
            <person name="Sato H."/>
            <person name="Nagai K."/>
            <person name="Kimura K."/>
            <person name="Makita H."/>
            <person name="Sekine M."/>
            <person name="Obayashi M."/>
            <person name="Nishi T."/>
            <person name="Shibahara T."/>
            <person name="Tanaka T."/>
            <person name="Ishii S."/>
            <person name="Yamamoto J."/>
            <person name="Saito K."/>
            <person name="Kawai Y."/>
            <person name="Isono Y."/>
            <person name="Nakamura Y."/>
            <person name="Nagahari K."/>
            <person name="Murakami K."/>
            <person name="Yasuda T."/>
            <person name="Iwayanagi T."/>
            <person name="Wagatsuma M."/>
            <person name="Shiratori A."/>
            <person name="Sudo H."/>
            <person name="Hosoiri T."/>
            <person name="Kaku Y."/>
            <person name="Kodaira H."/>
            <person name="Kondo H."/>
            <person name="Sugawara M."/>
            <person name="Takahashi M."/>
            <person name="Kanda K."/>
            <person name="Yokoi T."/>
            <person name="Furuya T."/>
            <person name="Kikkawa E."/>
            <person name="Omura Y."/>
            <person name="Abe K."/>
            <person name="Kamihara K."/>
            <person name="Katsuta N."/>
            <person name="Sato K."/>
            <person name="Tanikawa M."/>
            <person name="Yamazaki M."/>
            <person name="Ninomiya K."/>
            <person name="Ishibashi T."/>
            <person name="Yamashita H."/>
            <person name="Murakawa K."/>
            <person name="Fujimori K."/>
            <person name="Tanai H."/>
            <person name="Kimata M."/>
            <person name="Watanabe M."/>
            <person name="Hiraoka S."/>
            <person name="Chiba Y."/>
            <person name="Ishida S."/>
            <person name="Ono Y."/>
            <person name="Takiguchi S."/>
            <person name="Watanabe S."/>
            <person name="Yosida M."/>
            <person name="Hotuta T."/>
            <person name="Kusano J."/>
            <person name="Kanehori K."/>
            <person name="Takahashi-Fujii A."/>
            <person name="Hara H."/>
            <person name="Tanase T.-O."/>
            <person name="Nomura Y."/>
            <person name="Togiya S."/>
            <person name="Komai F."/>
            <person name="Hara R."/>
            <person name="Takeuchi K."/>
            <person name="Arita M."/>
            <person name="Imose N."/>
            <person name="Musashino K."/>
            <person name="Yuuki H."/>
            <person name="Oshima A."/>
            <person name="Sasaki N."/>
            <person name="Aotsuka S."/>
            <person name="Yoshikawa Y."/>
            <person name="Matsunawa H."/>
            <person name="Ichihara T."/>
            <person name="Shiohata N."/>
            <person name="Sano S."/>
            <person name="Moriya S."/>
            <person name="Momiyama H."/>
            <person name="Satoh N."/>
            <person name="Takami S."/>
            <person name="Terashima Y."/>
            <person name="Suzuki O."/>
            <person name="Nakagawa S."/>
            <person name="Senoh A."/>
            <person name="Mizoguchi H."/>
            <person name="Goto Y."/>
            <person name="Shimizu F."/>
            <person name="Wakebe H."/>
            <person name="Hishigaki H."/>
            <person name="Watanabe T."/>
            <person name="Sugiyama A."/>
            <person name="Takemoto M."/>
            <person name="Kawakami B."/>
            <person name="Yamazaki M."/>
            <person name="Watanabe K."/>
            <person name="Kumagai A."/>
            <person name="Itakura S."/>
            <person name="Fukuzumi Y."/>
            <person name="Fujimori Y."/>
            <person name="Komiyama M."/>
            <person name="Tashiro H."/>
            <person name="Tanigami A."/>
            <person name="Fujiwara T."/>
            <person name="Ono T."/>
            <person name="Yamada K."/>
            <person name="Fujii Y."/>
            <person name="Ozaki K."/>
            <person name="Hirao M."/>
            <person name="Ohmori Y."/>
            <person name="Kawabata A."/>
            <person name="Hikiji T."/>
            <person name="Kobatake N."/>
            <person name="Inagaki H."/>
            <person name="Ikema Y."/>
            <person name="Okamoto S."/>
            <person name="Okitani R."/>
            <person name="Kawakami T."/>
            <person name="Noguchi S."/>
            <person name="Itoh T."/>
            <person name="Shigeta K."/>
            <person name="Senba T."/>
            <person name="Matsumura K."/>
            <person name="Nakajima Y."/>
            <person name="Mizuno T."/>
            <person name="Morinaga M."/>
            <person name="Sasaki M."/>
            <person name="Togashi T."/>
            <person name="Oyama M."/>
            <person name="Hata H."/>
            <person name="Watanabe M."/>
            <person name="Komatsu T."/>
            <person name="Mizushima-Sugano J."/>
            <person name="Satoh T."/>
            <person name="Shirai Y."/>
            <person name="Takahashi Y."/>
            <person name="Nakagawa K."/>
            <person name="Okumura K."/>
            <person name="Nagase T."/>
            <person name="Nomura N."/>
            <person name="Kikuchi H."/>
            <person name="Masuho Y."/>
            <person name="Yamashita R."/>
            <person name="Nakai K."/>
            <person name="Yada T."/>
            <person name="Nakamura Y."/>
            <person name="Ohara O."/>
            <person name="Isogai T."/>
            <person name="Sugano S."/>
        </authorList>
    </citation>
    <scope>NUCLEOTIDE SEQUENCE [LARGE SCALE MRNA]</scope>
</reference>
<reference key="7">
    <citation type="submission" date="2005-04" db="EMBL/GenBank/DDBJ databases">
        <authorList>
            <person name="Suzuki Y."/>
            <person name="Sugano S."/>
            <person name="Totoki Y."/>
            <person name="Toyoda A."/>
            <person name="Takeda T."/>
            <person name="Sakaki Y."/>
            <person name="Tanaka A."/>
            <person name="Yokoyama S."/>
        </authorList>
    </citation>
    <scope>NUCLEOTIDE SEQUENCE [LARGE SCALE MRNA]</scope>
    <source>
        <tissue>Liver</tissue>
    </source>
</reference>
<reference key="8">
    <citation type="journal article" date="2003" name="Nature">
        <title>The DNA sequence of human chromosome 7.</title>
        <authorList>
            <person name="Hillier L.W."/>
            <person name="Fulton R.S."/>
            <person name="Fulton L.A."/>
            <person name="Graves T.A."/>
            <person name="Pepin K.H."/>
            <person name="Wagner-McPherson C."/>
            <person name="Layman D."/>
            <person name="Maas J."/>
            <person name="Jaeger S."/>
            <person name="Walker R."/>
            <person name="Wylie K."/>
            <person name="Sekhon M."/>
            <person name="Becker M.C."/>
            <person name="O'Laughlin M.D."/>
            <person name="Schaller M.E."/>
            <person name="Fewell G.A."/>
            <person name="Delehaunty K.D."/>
            <person name="Miner T.L."/>
            <person name="Nash W.E."/>
            <person name="Cordes M."/>
            <person name="Du H."/>
            <person name="Sun H."/>
            <person name="Edwards J."/>
            <person name="Bradshaw-Cordum H."/>
            <person name="Ali J."/>
            <person name="Andrews S."/>
            <person name="Isak A."/>
            <person name="Vanbrunt A."/>
            <person name="Nguyen C."/>
            <person name="Du F."/>
            <person name="Lamar B."/>
            <person name="Courtney L."/>
            <person name="Kalicki J."/>
            <person name="Ozersky P."/>
            <person name="Bielicki L."/>
            <person name="Scott K."/>
            <person name="Holmes A."/>
            <person name="Harkins R."/>
            <person name="Harris A."/>
            <person name="Strong C.M."/>
            <person name="Hou S."/>
            <person name="Tomlinson C."/>
            <person name="Dauphin-Kohlberg S."/>
            <person name="Kozlowicz-Reilly A."/>
            <person name="Leonard S."/>
            <person name="Rohlfing T."/>
            <person name="Rock S.M."/>
            <person name="Tin-Wollam A.-M."/>
            <person name="Abbott A."/>
            <person name="Minx P."/>
            <person name="Maupin R."/>
            <person name="Strowmatt C."/>
            <person name="Latreille P."/>
            <person name="Miller N."/>
            <person name="Johnson D."/>
            <person name="Murray J."/>
            <person name="Woessner J.P."/>
            <person name="Wendl M.C."/>
            <person name="Yang S.-P."/>
            <person name="Schultz B.R."/>
            <person name="Wallis J.W."/>
            <person name="Spieth J."/>
            <person name="Bieri T.A."/>
            <person name="Nelson J.O."/>
            <person name="Berkowicz N."/>
            <person name="Wohldmann P.E."/>
            <person name="Cook L.L."/>
            <person name="Hickenbotham M.T."/>
            <person name="Eldred J."/>
            <person name="Williams D."/>
            <person name="Bedell J.A."/>
            <person name="Mardis E.R."/>
            <person name="Clifton S.W."/>
            <person name="Chissoe S.L."/>
            <person name="Marra M.A."/>
            <person name="Raymond C."/>
            <person name="Haugen E."/>
            <person name="Gillett W."/>
            <person name="Zhou Y."/>
            <person name="James R."/>
            <person name="Phelps K."/>
            <person name="Iadanoto S."/>
            <person name="Bubb K."/>
            <person name="Simms E."/>
            <person name="Levy R."/>
            <person name="Clendenning J."/>
            <person name="Kaul R."/>
            <person name="Kent W.J."/>
            <person name="Furey T.S."/>
            <person name="Baertsch R.A."/>
            <person name="Brent M.R."/>
            <person name="Keibler E."/>
            <person name="Flicek P."/>
            <person name="Bork P."/>
            <person name="Suyama M."/>
            <person name="Bailey J.A."/>
            <person name="Portnoy M.E."/>
            <person name="Torrents D."/>
            <person name="Chinwalla A.T."/>
            <person name="Gish W.R."/>
            <person name="Eddy S.R."/>
            <person name="McPherson J.D."/>
            <person name="Olson M.V."/>
            <person name="Eichler E.E."/>
            <person name="Green E.D."/>
            <person name="Waterston R.H."/>
            <person name="Wilson R.K."/>
        </authorList>
    </citation>
    <scope>NUCLEOTIDE SEQUENCE [LARGE SCALE GENOMIC DNA]</scope>
</reference>
<reference key="9">
    <citation type="journal article" date="2003" name="Science">
        <title>Human chromosome 7: DNA sequence and biology.</title>
        <authorList>
            <person name="Scherer S.W."/>
            <person name="Cheung J."/>
            <person name="MacDonald J.R."/>
            <person name="Osborne L.R."/>
            <person name="Nakabayashi K."/>
            <person name="Herbrick J.-A."/>
            <person name="Carson A.R."/>
            <person name="Parker-Katiraee L."/>
            <person name="Skaug J."/>
            <person name="Khaja R."/>
            <person name="Zhang J."/>
            <person name="Hudek A.K."/>
            <person name="Li M."/>
            <person name="Haddad M."/>
            <person name="Duggan G.E."/>
            <person name="Fernandez B.A."/>
            <person name="Kanematsu E."/>
            <person name="Gentles S."/>
            <person name="Christopoulos C.C."/>
            <person name="Choufani S."/>
            <person name="Kwasnicka D."/>
            <person name="Zheng X.H."/>
            <person name="Lai Z."/>
            <person name="Nusskern D.R."/>
            <person name="Zhang Q."/>
            <person name="Gu Z."/>
            <person name="Lu F."/>
            <person name="Zeesman S."/>
            <person name="Nowaczyk M.J."/>
            <person name="Teshima I."/>
            <person name="Chitayat D."/>
            <person name="Shuman C."/>
            <person name="Weksberg R."/>
            <person name="Zackai E.H."/>
            <person name="Grebe T.A."/>
            <person name="Cox S.R."/>
            <person name="Kirkpatrick S.J."/>
            <person name="Rahman N."/>
            <person name="Friedman J.M."/>
            <person name="Heng H.H.Q."/>
            <person name="Pelicci P.G."/>
            <person name="Lo-Coco F."/>
            <person name="Belloni E."/>
            <person name="Shaffer L.G."/>
            <person name="Pober B."/>
            <person name="Morton C.C."/>
            <person name="Gusella J.F."/>
            <person name="Bruns G.A.P."/>
            <person name="Korf B.R."/>
            <person name="Quade B.J."/>
            <person name="Ligon A.H."/>
            <person name="Ferguson H."/>
            <person name="Higgins A.W."/>
            <person name="Leach N.T."/>
            <person name="Herrick S.R."/>
            <person name="Lemyre E."/>
            <person name="Farra C.G."/>
            <person name="Kim H.-G."/>
            <person name="Summers A.M."/>
            <person name="Gripp K.W."/>
            <person name="Roberts W."/>
            <person name="Szatmari P."/>
            <person name="Winsor E.J.T."/>
            <person name="Grzeschik K.-H."/>
            <person name="Teebi A."/>
            <person name="Minassian B.A."/>
            <person name="Kere J."/>
            <person name="Armengol L."/>
            <person name="Pujana M.A."/>
            <person name="Estivill X."/>
            <person name="Wilson M.D."/>
            <person name="Koop B.F."/>
            <person name="Tosi S."/>
            <person name="Moore G.E."/>
            <person name="Boright A.P."/>
            <person name="Zlotorynski E."/>
            <person name="Kerem B."/>
            <person name="Kroisel P.M."/>
            <person name="Petek E."/>
            <person name="Oscier D.G."/>
            <person name="Mould S.J."/>
            <person name="Doehner H."/>
            <person name="Doehner K."/>
            <person name="Rommens J.M."/>
            <person name="Vincent J.B."/>
            <person name="Venter J.C."/>
            <person name="Li P.W."/>
            <person name="Mural R.J."/>
            <person name="Adams M.D."/>
            <person name="Tsui L.-C."/>
        </authorList>
    </citation>
    <scope>NUCLEOTIDE SEQUENCE [LARGE SCALE GENOMIC DNA]</scope>
</reference>
<reference key="10">
    <citation type="submission" date="2005-07" db="EMBL/GenBank/DDBJ databases">
        <authorList>
            <person name="Mural R.J."/>
            <person name="Istrail S."/>
            <person name="Sutton G."/>
            <person name="Florea L."/>
            <person name="Halpern A.L."/>
            <person name="Mobarry C.M."/>
            <person name="Lippert R."/>
            <person name="Walenz B."/>
            <person name="Shatkay H."/>
            <person name="Dew I."/>
            <person name="Miller J.R."/>
            <person name="Flanigan M.J."/>
            <person name="Edwards N.J."/>
            <person name="Bolanos R."/>
            <person name="Fasulo D."/>
            <person name="Halldorsson B.V."/>
            <person name="Hannenhalli S."/>
            <person name="Turner R."/>
            <person name="Yooseph S."/>
            <person name="Lu F."/>
            <person name="Nusskern D.R."/>
            <person name="Shue B.C."/>
            <person name="Zheng X.H."/>
            <person name="Zhong F."/>
            <person name="Delcher A.L."/>
            <person name="Huson D.H."/>
            <person name="Kravitz S.A."/>
            <person name="Mouchard L."/>
            <person name="Reinert K."/>
            <person name="Remington K.A."/>
            <person name="Clark A.G."/>
            <person name="Waterman M.S."/>
            <person name="Eichler E.E."/>
            <person name="Adams M.D."/>
            <person name="Hunkapiller M.W."/>
            <person name="Myers E.W."/>
            <person name="Venter J.C."/>
        </authorList>
    </citation>
    <scope>NUCLEOTIDE SEQUENCE [LARGE SCALE GENOMIC DNA]</scope>
</reference>
<reference key="11">
    <citation type="journal article" date="2004" name="Genome Res.">
        <title>The status, quality, and expansion of the NIH full-length cDNA project: the Mammalian Gene Collection (MGC).</title>
        <authorList>
            <consortium name="The MGC Project Team"/>
        </authorList>
    </citation>
    <scope>NUCLEOTIDE SEQUENCE [LARGE SCALE MRNA]</scope>
    <source>
        <tissue>Lung</tissue>
        <tissue>Testis</tissue>
    </source>
</reference>
<reference key="12">
    <citation type="journal article" date="2000" name="J. Biol. Chem.">
        <title>Interaction of linker for activation of T cells with multiple adapter proteins in platelets activated by the glycoprotein VI-selective ligand, convulxin.</title>
        <authorList>
            <person name="Asazuma N."/>
            <person name="Wilde J.I."/>
            <person name="Berlanga O."/>
            <person name="Leduc M."/>
            <person name="Leo A."/>
            <person name="Schweighoffer E."/>
            <person name="Tybulewicz V."/>
            <person name="Bon C."/>
            <person name="Liu S.K."/>
            <person name="McGlade C.J."/>
            <person name="Schraven B."/>
            <person name="Watson S.P."/>
        </authorList>
    </citation>
    <scope>PHOSPHORYLATION</scope>
    <scope>INTERACTION WITH FYB1; LAT AND GRB2</scope>
    <scope>TISSUE SPECIFICITY</scope>
</reference>
<reference key="13">
    <citation type="journal article" date="2001" name="J. Biol. Chem.">
        <title>PRAM-1 is a novel adaptor protein regulated by retinoic acid (RA) and promyelocytic leukemia (PML)-RA receptor alpha in acute promyelocytic leukemia cells.</title>
        <authorList>
            <person name="Moog-Lutz C."/>
            <person name="Peterson E.J."/>
            <person name="Lutz P.G."/>
            <person name="Eliason S."/>
            <person name="Cave-Riant F."/>
            <person name="Singer A."/>
            <person name="Di Gioia Y."/>
            <person name="Dmovski S."/>
            <person name="Kamens J."/>
            <person name="Cayre Y.E."/>
            <person name="Koretzky G."/>
        </authorList>
    </citation>
    <scope>INDUCTION</scope>
    <scope>INTERACTION WITH PRAM1</scope>
</reference>
<reference key="14">
    <citation type="journal article" date="2008" name="Proc. Natl. Acad. Sci. U.S.A.">
        <title>A quantitative atlas of mitotic phosphorylation.</title>
        <authorList>
            <person name="Dephoure N."/>
            <person name="Zhou C."/>
            <person name="Villen J."/>
            <person name="Beausoleil S.A."/>
            <person name="Bakalarski C.E."/>
            <person name="Elledge S.J."/>
            <person name="Gygi S.P."/>
        </authorList>
    </citation>
    <scope>IDENTIFICATION BY MASS SPECTROMETRY [LARGE SCALE ANALYSIS]</scope>
    <source>
        <tissue>Cervix carcinoma</tissue>
    </source>
</reference>
<reference key="15">
    <citation type="journal article" date="2009" name="BMC Immunol.">
        <title>Identification of SH3 domain interaction partners of human FasL (CD178) by phage display screening.</title>
        <authorList>
            <person name="Voss M."/>
            <person name="Lettau M."/>
            <person name="Janssen O."/>
        </authorList>
    </citation>
    <scope>INTERACTION WITH FASLG</scope>
</reference>
<reference key="16">
    <citation type="journal article" date="2013" name="J. Proteome Res.">
        <title>Toward a comprehensive characterization of a human cancer cell phosphoproteome.</title>
        <authorList>
            <person name="Zhou H."/>
            <person name="Di Palma S."/>
            <person name="Preisinger C."/>
            <person name="Peng M."/>
            <person name="Polat A.N."/>
            <person name="Heck A.J."/>
            <person name="Mohammed S."/>
        </authorList>
    </citation>
    <scope>PHOSPHORYLATION [LARGE SCALE ANALYSIS] AT SER-5 AND SER-6</scope>
    <scope>IDENTIFICATION BY MASS SPECTROMETRY [LARGE SCALE ANALYSIS]</scope>
    <source>
        <tissue>Erythroleukemia</tissue>
    </source>
</reference>
<reference key="17">
    <citation type="journal article" date="2014" name="J. Proteomics">
        <title>An enzyme assisted RP-RPLC approach for in-depth analysis of human liver phosphoproteome.</title>
        <authorList>
            <person name="Bian Y."/>
            <person name="Song C."/>
            <person name="Cheng K."/>
            <person name="Dong M."/>
            <person name="Wang F."/>
            <person name="Huang J."/>
            <person name="Sun D."/>
            <person name="Wang L."/>
            <person name="Ye M."/>
            <person name="Zou H."/>
        </authorList>
    </citation>
    <scope>PHOSPHORYLATION [LARGE SCALE ANALYSIS] AT SER-6 AND TYR-197</scope>
    <scope>IDENTIFICATION BY MASS SPECTROMETRY [LARGE SCALE ANALYSIS]</scope>
    <source>
        <tissue>Liver</tissue>
    </source>
</reference>
<reference key="18">
    <citation type="journal article" date="2011" name="J. Biol. Chem.">
        <title>Substrate specificity of lymphoid-specific tyrosine phosphatase (Lyp) and identification of Src kinase-associated protein of 55 kDa homolog (SKAP-HOM) as a Lyp substrate.</title>
        <authorList>
            <person name="Yu X."/>
            <person name="Chen M."/>
            <person name="Zhang S."/>
            <person name="Yu Z.H."/>
            <person name="Sun J.P."/>
            <person name="Wang L."/>
            <person name="Liu S."/>
            <person name="Imasaki T."/>
            <person name="Takagi Y."/>
            <person name="Zhang Z.Y."/>
        </authorList>
    </citation>
    <scope>X-RAY CRYSTALLOGRAPHY (2.9 ANGSTROMS) OF 71-79 IN COMPLEX WITH PTPN22</scope>
    <scope>PHOSPHORYLATION AT TYR-75</scope>
</reference>
<gene>
    <name type="primary">SKAP2</name>
    <name type="synonym">PRAP</name>
    <name type="synonym">RA70</name>
    <name type="synonym">SAPS</name>
    <name type="synonym">SCAP2</name>
    <name type="synonym">SKAP55R</name>
</gene>
<protein>
    <recommendedName>
        <fullName>Src kinase-associated phosphoprotein 2</fullName>
    </recommendedName>
    <alternativeName>
        <fullName>Pyk2/RAFTK-associated protein</fullName>
    </alternativeName>
    <alternativeName>
        <fullName>Retinoic acid-induced protein 70</fullName>
    </alternativeName>
    <alternativeName>
        <fullName>SKAP55 homolog</fullName>
        <shortName>SKAP-55HOM</shortName>
        <shortName>SKAP-HOM</shortName>
    </alternativeName>
    <alternativeName>
        <fullName>Src family-associated phosphoprotein 2</fullName>
    </alternativeName>
    <alternativeName>
        <fullName>Src kinase-associated phosphoprotein 55-related protein</fullName>
    </alternativeName>
    <alternativeName>
        <fullName>Src-associated adapter protein with PH and SH3 domains</fullName>
    </alternativeName>
</protein>
<name>SKAP2_HUMAN</name>
<sequence length="359" mass="41217">MPNPSSTSSPYPLPEEIRNLLADVETFVADILKGENLSKKAKEKRESLIKKIKDVKSIYLQEFQDKGDAEDGEEYDDPFAGPPDTISLASERYDKDDEAPSDGAQFPPIAAQDLPFVLKAGYLEKRRKDHSFLGFEWQKRWCALSKTVFYYYGSDKDKQQKGEFAIDGYSVRMNNTLRKDGKKDCCFEISAPDKRIYQFTAASPKDAEEWVQQLKFVLQDMESDIIPEDYDERGELYDDVDHPLPISNPLTSSQPIDDEIYEELPEEEEDSAPVKVEEQRKMSQDSVHHTSGDKSTDYANFYQGLWDCTGAFSDELSFKRGDVIYILSKEYNRYGWWVGEMKGAIGLVPKAYIMEMYDI</sequence>
<evidence type="ECO:0000250" key="1"/>
<evidence type="ECO:0000250" key="2">
    <source>
        <dbReference type="UniProtKB" id="Q3UND0"/>
    </source>
</evidence>
<evidence type="ECO:0000250" key="3">
    <source>
        <dbReference type="UniProtKB" id="Q920G0"/>
    </source>
</evidence>
<evidence type="ECO:0000255" key="4">
    <source>
        <dbReference type="PROSITE-ProRule" id="PRU00145"/>
    </source>
</evidence>
<evidence type="ECO:0000255" key="5">
    <source>
        <dbReference type="PROSITE-ProRule" id="PRU00192"/>
    </source>
</evidence>
<evidence type="ECO:0000256" key="6">
    <source>
        <dbReference type="SAM" id="MobiDB-lite"/>
    </source>
</evidence>
<evidence type="ECO:0000269" key="7">
    <source>
    </source>
</evidence>
<evidence type="ECO:0000269" key="8">
    <source>
    </source>
</evidence>
<evidence type="ECO:0000269" key="9">
    <source>
    </source>
</evidence>
<evidence type="ECO:0000269" key="10">
    <source>
    </source>
</evidence>
<evidence type="ECO:0000269" key="11">
    <source>
    </source>
</evidence>
<evidence type="ECO:0000269" key="12">
    <source>
    </source>
</evidence>
<evidence type="ECO:0000269" key="13">
    <source>
    </source>
</evidence>
<evidence type="ECO:0000269" key="14">
    <source>
    </source>
</evidence>
<evidence type="ECO:0000269" key="15">
    <source ref="5"/>
</evidence>
<evidence type="ECO:0000305" key="16"/>
<evidence type="ECO:0007744" key="17">
    <source>
    </source>
</evidence>
<evidence type="ECO:0007744" key="18">
    <source>
    </source>
</evidence>
<proteinExistence type="evidence at protein level"/>
<accession>O75563</accession>
<accession>A4D173</accession>
<accession>Q53GP6</accession>
<accession>Q75MK6</accession>
<accession>Q75MZ4</accession>
<accession>Q9UBZ3</accession>
<accession>Q9UED8</accession>